<name>RS10_POLAQ</name>
<comment type="function">
    <text evidence="1">Involved in the binding of tRNA to the ribosomes.</text>
</comment>
<comment type="subunit">
    <text evidence="1">Part of the 30S ribosomal subunit.</text>
</comment>
<comment type="similarity">
    <text evidence="1">Belongs to the universal ribosomal protein uS10 family.</text>
</comment>
<dbReference type="EMBL" id="CP000655">
    <property type="protein sequence ID" value="ABP33274.1"/>
    <property type="molecule type" value="Genomic_DNA"/>
</dbReference>
<dbReference type="RefSeq" id="WP_011901899.1">
    <property type="nucleotide sequence ID" value="NC_009379.1"/>
</dbReference>
<dbReference type="SMR" id="A4SUW0"/>
<dbReference type="GeneID" id="83596656"/>
<dbReference type="KEGG" id="pnu:Pnuc_0052"/>
<dbReference type="eggNOG" id="COG0051">
    <property type="taxonomic scope" value="Bacteria"/>
</dbReference>
<dbReference type="HOGENOM" id="CLU_122625_1_3_4"/>
<dbReference type="Proteomes" id="UP000000231">
    <property type="component" value="Chromosome"/>
</dbReference>
<dbReference type="GO" id="GO:1990904">
    <property type="term" value="C:ribonucleoprotein complex"/>
    <property type="evidence" value="ECO:0007669"/>
    <property type="project" value="UniProtKB-KW"/>
</dbReference>
<dbReference type="GO" id="GO:0005840">
    <property type="term" value="C:ribosome"/>
    <property type="evidence" value="ECO:0007669"/>
    <property type="project" value="UniProtKB-KW"/>
</dbReference>
<dbReference type="GO" id="GO:0003735">
    <property type="term" value="F:structural constituent of ribosome"/>
    <property type="evidence" value="ECO:0007669"/>
    <property type="project" value="InterPro"/>
</dbReference>
<dbReference type="GO" id="GO:0000049">
    <property type="term" value="F:tRNA binding"/>
    <property type="evidence" value="ECO:0007669"/>
    <property type="project" value="UniProtKB-UniRule"/>
</dbReference>
<dbReference type="GO" id="GO:0006412">
    <property type="term" value="P:translation"/>
    <property type="evidence" value="ECO:0007669"/>
    <property type="project" value="UniProtKB-UniRule"/>
</dbReference>
<dbReference type="FunFam" id="3.30.70.600:FF:000001">
    <property type="entry name" value="30S ribosomal protein S10"/>
    <property type="match status" value="1"/>
</dbReference>
<dbReference type="Gene3D" id="3.30.70.600">
    <property type="entry name" value="Ribosomal protein S10 domain"/>
    <property type="match status" value="1"/>
</dbReference>
<dbReference type="HAMAP" id="MF_00508">
    <property type="entry name" value="Ribosomal_uS10"/>
    <property type="match status" value="1"/>
</dbReference>
<dbReference type="InterPro" id="IPR001848">
    <property type="entry name" value="Ribosomal_uS10"/>
</dbReference>
<dbReference type="InterPro" id="IPR018268">
    <property type="entry name" value="Ribosomal_uS10_CS"/>
</dbReference>
<dbReference type="InterPro" id="IPR027486">
    <property type="entry name" value="Ribosomal_uS10_dom"/>
</dbReference>
<dbReference type="InterPro" id="IPR036838">
    <property type="entry name" value="Ribosomal_uS10_dom_sf"/>
</dbReference>
<dbReference type="NCBIfam" id="NF001861">
    <property type="entry name" value="PRK00596.1"/>
    <property type="match status" value="1"/>
</dbReference>
<dbReference type="NCBIfam" id="TIGR01049">
    <property type="entry name" value="rpsJ_bact"/>
    <property type="match status" value="1"/>
</dbReference>
<dbReference type="PANTHER" id="PTHR11700">
    <property type="entry name" value="30S RIBOSOMAL PROTEIN S10 FAMILY MEMBER"/>
    <property type="match status" value="1"/>
</dbReference>
<dbReference type="Pfam" id="PF00338">
    <property type="entry name" value="Ribosomal_S10"/>
    <property type="match status" value="1"/>
</dbReference>
<dbReference type="PRINTS" id="PR00971">
    <property type="entry name" value="RIBOSOMALS10"/>
</dbReference>
<dbReference type="SMART" id="SM01403">
    <property type="entry name" value="Ribosomal_S10"/>
    <property type="match status" value="1"/>
</dbReference>
<dbReference type="SUPFAM" id="SSF54999">
    <property type="entry name" value="Ribosomal protein S10"/>
    <property type="match status" value="1"/>
</dbReference>
<dbReference type="PROSITE" id="PS00361">
    <property type="entry name" value="RIBOSOMAL_S10"/>
    <property type="match status" value="1"/>
</dbReference>
<sequence length="103" mass="11772">MQNQKIRIRLKAFDYRLIDQSAAEIVDTAKRTGAVVKGPVPLPTRIERFDILRSPHVNKTSRDQLEIRTHLRLMDIVDPTEKTVDALMKLDLPAGVDVEIKLQ</sequence>
<accession>A4SUW0</accession>
<proteinExistence type="inferred from homology"/>
<organism>
    <name type="scientific">Polynucleobacter asymbioticus (strain DSM 18221 / CIP 109841 / QLW-P1DMWA-1)</name>
    <name type="common">Polynucleobacter necessarius subsp. asymbioticus</name>
    <dbReference type="NCBI Taxonomy" id="312153"/>
    <lineage>
        <taxon>Bacteria</taxon>
        <taxon>Pseudomonadati</taxon>
        <taxon>Pseudomonadota</taxon>
        <taxon>Betaproteobacteria</taxon>
        <taxon>Burkholderiales</taxon>
        <taxon>Burkholderiaceae</taxon>
        <taxon>Polynucleobacter</taxon>
    </lineage>
</organism>
<protein>
    <recommendedName>
        <fullName evidence="1">Small ribosomal subunit protein uS10</fullName>
    </recommendedName>
    <alternativeName>
        <fullName evidence="2">30S ribosomal protein S10</fullName>
    </alternativeName>
</protein>
<gene>
    <name evidence="1" type="primary">rpsJ</name>
    <name type="ordered locus">Pnuc_0052</name>
</gene>
<keyword id="KW-1185">Reference proteome</keyword>
<keyword id="KW-0687">Ribonucleoprotein</keyword>
<keyword id="KW-0689">Ribosomal protein</keyword>
<feature type="chain" id="PRO_1000081559" description="Small ribosomal subunit protein uS10">
    <location>
        <begin position="1"/>
        <end position="103"/>
    </location>
</feature>
<evidence type="ECO:0000255" key="1">
    <source>
        <dbReference type="HAMAP-Rule" id="MF_00508"/>
    </source>
</evidence>
<evidence type="ECO:0000305" key="2"/>
<reference key="1">
    <citation type="journal article" date="2012" name="Stand. Genomic Sci.">
        <title>Complete genome sequence of Polynucleobacter necessarius subsp. asymbioticus type strain (QLW-P1DMWA-1(T)).</title>
        <authorList>
            <person name="Meincke L."/>
            <person name="Copeland A."/>
            <person name="Lapidus A."/>
            <person name="Lucas S."/>
            <person name="Berry K.W."/>
            <person name="Del Rio T.G."/>
            <person name="Hammon N."/>
            <person name="Dalin E."/>
            <person name="Tice H."/>
            <person name="Pitluck S."/>
            <person name="Richardson P."/>
            <person name="Bruce D."/>
            <person name="Goodwin L."/>
            <person name="Han C."/>
            <person name="Tapia R."/>
            <person name="Detter J.C."/>
            <person name="Schmutz J."/>
            <person name="Brettin T."/>
            <person name="Larimer F."/>
            <person name="Land M."/>
            <person name="Hauser L."/>
            <person name="Kyrpides N.C."/>
            <person name="Ivanova N."/>
            <person name="Goker M."/>
            <person name="Woyke T."/>
            <person name="Wu Q.L."/>
            <person name="Pockl M."/>
            <person name="Hahn M.W."/>
            <person name="Klenk H.P."/>
        </authorList>
    </citation>
    <scope>NUCLEOTIDE SEQUENCE [LARGE SCALE GENOMIC DNA]</scope>
    <source>
        <strain>DSM 18221 / CIP 109841 / QLW-P1DMWA-1</strain>
    </source>
</reference>